<accession>Q8ZV45</accession>
<dbReference type="EC" id="2.4.2.18" evidence="1"/>
<dbReference type="EMBL" id="AE009441">
    <property type="protein sequence ID" value="AAL64211.1"/>
    <property type="molecule type" value="Genomic_DNA"/>
</dbReference>
<dbReference type="RefSeq" id="WP_011008679.1">
    <property type="nucleotide sequence ID" value="NC_003364.1"/>
</dbReference>
<dbReference type="SMR" id="Q8ZV45"/>
<dbReference type="FunCoup" id="Q8ZV45">
    <property type="interactions" value="104"/>
</dbReference>
<dbReference type="STRING" id="178306.PAE2461"/>
<dbReference type="EnsemblBacteria" id="AAL64211">
    <property type="protein sequence ID" value="AAL64211"/>
    <property type="gene ID" value="PAE2461"/>
</dbReference>
<dbReference type="GeneID" id="1464552"/>
<dbReference type="KEGG" id="pai:PAE2461"/>
<dbReference type="PATRIC" id="fig|178306.9.peg.1835"/>
<dbReference type="eggNOG" id="arCOG02012">
    <property type="taxonomic scope" value="Archaea"/>
</dbReference>
<dbReference type="HOGENOM" id="CLU_034315_2_1_2"/>
<dbReference type="InParanoid" id="Q8ZV45"/>
<dbReference type="UniPathway" id="UPA00035">
    <property type="reaction ID" value="UER00041"/>
</dbReference>
<dbReference type="Proteomes" id="UP000002439">
    <property type="component" value="Chromosome"/>
</dbReference>
<dbReference type="GO" id="GO:0005829">
    <property type="term" value="C:cytosol"/>
    <property type="evidence" value="ECO:0000318"/>
    <property type="project" value="GO_Central"/>
</dbReference>
<dbReference type="GO" id="GO:0004048">
    <property type="term" value="F:anthranilate phosphoribosyltransferase activity"/>
    <property type="evidence" value="ECO:0007669"/>
    <property type="project" value="UniProtKB-UniRule"/>
</dbReference>
<dbReference type="GO" id="GO:0000287">
    <property type="term" value="F:magnesium ion binding"/>
    <property type="evidence" value="ECO:0007669"/>
    <property type="project" value="UniProtKB-UniRule"/>
</dbReference>
<dbReference type="GO" id="GO:0000162">
    <property type="term" value="P:L-tryptophan biosynthetic process"/>
    <property type="evidence" value="ECO:0000318"/>
    <property type="project" value="GO_Central"/>
</dbReference>
<dbReference type="FunFam" id="3.40.1030.10:FF:000002">
    <property type="entry name" value="Anthranilate phosphoribosyltransferase"/>
    <property type="match status" value="1"/>
</dbReference>
<dbReference type="Gene3D" id="3.40.1030.10">
    <property type="entry name" value="Nucleoside phosphorylase/phosphoribosyltransferase catalytic domain"/>
    <property type="match status" value="1"/>
</dbReference>
<dbReference type="Gene3D" id="1.20.970.10">
    <property type="entry name" value="Transferase, Pyrimidine Nucleoside Phosphorylase, Chain C"/>
    <property type="match status" value="1"/>
</dbReference>
<dbReference type="HAMAP" id="MF_00211">
    <property type="entry name" value="TrpD"/>
    <property type="match status" value="1"/>
</dbReference>
<dbReference type="InterPro" id="IPR005940">
    <property type="entry name" value="Anthranilate_Pribosyl_Tfrase"/>
</dbReference>
<dbReference type="InterPro" id="IPR000312">
    <property type="entry name" value="Glycosyl_Trfase_fam3"/>
</dbReference>
<dbReference type="InterPro" id="IPR017459">
    <property type="entry name" value="Glycosyl_Trfase_fam3_N_dom"/>
</dbReference>
<dbReference type="InterPro" id="IPR036320">
    <property type="entry name" value="Glycosyl_Trfase_fam3_N_dom_sf"/>
</dbReference>
<dbReference type="InterPro" id="IPR035902">
    <property type="entry name" value="Nuc_phospho_transferase"/>
</dbReference>
<dbReference type="NCBIfam" id="TIGR01245">
    <property type="entry name" value="trpD"/>
    <property type="match status" value="1"/>
</dbReference>
<dbReference type="PANTHER" id="PTHR43285">
    <property type="entry name" value="ANTHRANILATE PHOSPHORIBOSYLTRANSFERASE"/>
    <property type="match status" value="1"/>
</dbReference>
<dbReference type="PANTHER" id="PTHR43285:SF2">
    <property type="entry name" value="ANTHRANILATE PHOSPHORIBOSYLTRANSFERASE"/>
    <property type="match status" value="1"/>
</dbReference>
<dbReference type="Pfam" id="PF02885">
    <property type="entry name" value="Glycos_trans_3N"/>
    <property type="match status" value="1"/>
</dbReference>
<dbReference type="Pfam" id="PF00591">
    <property type="entry name" value="Glycos_transf_3"/>
    <property type="match status" value="1"/>
</dbReference>
<dbReference type="SUPFAM" id="SSF52418">
    <property type="entry name" value="Nucleoside phosphorylase/phosphoribosyltransferase catalytic domain"/>
    <property type="match status" value="1"/>
</dbReference>
<dbReference type="SUPFAM" id="SSF47648">
    <property type="entry name" value="Nucleoside phosphorylase/phosphoribosyltransferase N-terminal domain"/>
    <property type="match status" value="1"/>
</dbReference>
<evidence type="ECO:0000255" key="1">
    <source>
        <dbReference type="HAMAP-Rule" id="MF_00211"/>
    </source>
</evidence>
<protein>
    <recommendedName>
        <fullName evidence="1">Anthranilate phosphoribosyltransferase</fullName>
        <ecNumber evidence="1">2.4.2.18</ecNumber>
    </recommendedName>
</protein>
<keyword id="KW-0028">Amino-acid biosynthesis</keyword>
<keyword id="KW-0057">Aromatic amino acid biosynthesis</keyword>
<keyword id="KW-0328">Glycosyltransferase</keyword>
<keyword id="KW-0460">Magnesium</keyword>
<keyword id="KW-0479">Metal-binding</keyword>
<keyword id="KW-1185">Reference proteome</keyword>
<keyword id="KW-0808">Transferase</keyword>
<keyword id="KW-0822">Tryptophan biosynthesis</keyword>
<proteinExistence type="inferred from homology"/>
<name>TRPD_PYRAE</name>
<gene>
    <name evidence="1" type="primary">trpD</name>
    <name type="ordered locus">PAE2461</name>
</gene>
<organism>
    <name type="scientific">Pyrobaculum aerophilum (strain ATCC 51768 / DSM 7523 / JCM 9630 / CIP 104966 / NBRC 100827 / IM2)</name>
    <dbReference type="NCBI Taxonomy" id="178306"/>
    <lineage>
        <taxon>Archaea</taxon>
        <taxon>Thermoproteota</taxon>
        <taxon>Thermoprotei</taxon>
        <taxon>Thermoproteales</taxon>
        <taxon>Thermoproteaceae</taxon>
        <taxon>Pyrobaculum</taxon>
    </lineage>
</organism>
<reference key="1">
    <citation type="journal article" date="2002" name="Proc. Natl. Acad. Sci. U.S.A.">
        <title>Genome sequence of the hyperthermophilic crenarchaeon Pyrobaculum aerophilum.</title>
        <authorList>
            <person name="Fitz-Gibbon S.T."/>
            <person name="Ladner H."/>
            <person name="Kim U.-J."/>
            <person name="Stetter K.O."/>
            <person name="Simon M.I."/>
            <person name="Miller J.H."/>
        </authorList>
    </citation>
    <scope>NUCLEOTIDE SEQUENCE [LARGE SCALE GENOMIC DNA]</scope>
    <source>
        <strain>ATCC 51768 / DSM 7523 / JCM 9630 / CIP 104966 / NBRC 100827 / IM2</strain>
    </source>
</reference>
<feature type="chain" id="PRO_0000154519" description="Anthranilate phosphoribosyltransferase">
    <location>
        <begin position="1"/>
        <end position="333"/>
    </location>
</feature>
<feature type="binding site" evidence="1">
    <location>
        <position position="80"/>
    </location>
    <ligand>
        <name>5-phospho-alpha-D-ribose 1-diphosphate</name>
        <dbReference type="ChEBI" id="CHEBI:58017"/>
    </ligand>
</feature>
<feature type="binding site" evidence="1">
    <location>
        <position position="80"/>
    </location>
    <ligand>
        <name>anthranilate</name>
        <dbReference type="ChEBI" id="CHEBI:16567"/>
        <label>1</label>
    </ligand>
</feature>
<feature type="binding site" evidence="1">
    <location>
        <begin position="83"/>
        <end position="84"/>
    </location>
    <ligand>
        <name>5-phospho-alpha-D-ribose 1-diphosphate</name>
        <dbReference type="ChEBI" id="CHEBI:58017"/>
    </ligand>
</feature>
<feature type="binding site" evidence="1">
    <location>
        <position position="88"/>
    </location>
    <ligand>
        <name>5-phospho-alpha-D-ribose 1-diphosphate</name>
        <dbReference type="ChEBI" id="CHEBI:58017"/>
    </ligand>
</feature>
<feature type="binding site" evidence="1">
    <location>
        <begin position="90"/>
        <end position="93"/>
    </location>
    <ligand>
        <name>5-phospho-alpha-D-ribose 1-diphosphate</name>
        <dbReference type="ChEBI" id="CHEBI:58017"/>
    </ligand>
</feature>
<feature type="binding site" evidence="1">
    <location>
        <position position="92"/>
    </location>
    <ligand>
        <name>Mg(2+)</name>
        <dbReference type="ChEBI" id="CHEBI:18420"/>
        <label>1</label>
    </ligand>
</feature>
<feature type="binding site" evidence="1">
    <location>
        <begin position="108"/>
        <end position="116"/>
    </location>
    <ligand>
        <name>5-phospho-alpha-D-ribose 1-diphosphate</name>
        <dbReference type="ChEBI" id="CHEBI:58017"/>
    </ligand>
</feature>
<feature type="binding site" evidence="1">
    <location>
        <position position="111"/>
    </location>
    <ligand>
        <name>anthranilate</name>
        <dbReference type="ChEBI" id="CHEBI:16567"/>
        <label>1</label>
    </ligand>
</feature>
<feature type="binding site" evidence="1">
    <location>
        <position position="120"/>
    </location>
    <ligand>
        <name>5-phospho-alpha-D-ribose 1-diphosphate</name>
        <dbReference type="ChEBI" id="CHEBI:58017"/>
    </ligand>
</feature>
<feature type="binding site" evidence="1">
    <location>
        <position position="166"/>
    </location>
    <ligand>
        <name>anthranilate</name>
        <dbReference type="ChEBI" id="CHEBI:16567"/>
        <label>2</label>
    </ligand>
</feature>
<feature type="binding site" evidence="1">
    <location>
        <position position="224"/>
    </location>
    <ligand>
        <name>Mg(2+)</name>
        <dbReference type="ChEBI" id="CHEBI:18420"/>
        <label>2</label>
    </ligand>
</feature>
<feature type="binding site" evidence="1">
    <location>
        <position position="225"/>
    </location>
    <ligand>
        <name>Mg(2+)</name>
        <dbReference type="ChEBI" id="CHEBI:18420"/>
        <label>1</label>
    </ligand>
</feature>
<feature type="binding site" evidence="1">
    <location>
        <position position="225"/>
    </location>
    <ligand>
        <name>Mg(2+)</name>
        <dbReference type="ChEBI" id="CHEBI:18420"/>
        <label>2</label>
    </ligand>
</feature>
<sequence>MDLRALLRKLGHGQSLNADEAYILGKGILTGTLSEVEIAASLTAMKVRGETAEEVAGFVKMAREFAVRVPLTVEAIDTAGTGGDGAGTINLSTAAAIVAAAAGAKVLKHGNRSASGMFGSADFMEAVGYNLEIGPERAARLVEEVGFAFVFAPKYHPAFARVAPVRRQLPFRTVFNIVGPLANPGLVKRQLIGVAETRLLDVISEAAARLGFEHAVVVHGSGVDEVTTEGETVVYEVRKGAAERYTISPGDLGAPRVPLPRASSKEEAVAKALAGLRGELLEASIAIAVNAAFALYVAGVVKDVKDGYELAINTIREGAAYRKLMEAVESSKT</sequence>
<comment type="function">
    <text evidence="1">Catalyzes the transfer of the phosphoribosyl group of 5-phosphorylribose-1-pyrophosphate (PRPP) to anthranilate to yield N-(5'-phosphoribosyl)-anthranilate (PRA).</text>
</comment>
<comment type="catalytic activity">
    <reaction evidence="1">
        <text>N-(5-phospho-beta-D-ribosyl)anthranilate + diphosphate = 5-phospho-alpha-D-ribose 1-diphosphate + anthranilate</text>
        <dbReference type="Rhea" id="RHEA:11768"/>
        <dbReference type="ChEBI" id="CHEBI:16567"/>
        <dbReference type="ChEBI" id="CHEBI:18277"/>
        <dbReference type="ChEBI" id="CHEBI:33019"/>
        <dbReference type="ChEBI" id="CHEBI:58017"/>
        <dbReference type="EC" id="2.4.2.18"/>
    </reaction>
</comment>
<comment type="cofactor">
    <cofactor evidence="1">
        <name>Mg(2+)</name>
        <dbReference type="ChEBI" id="CHEBI:18420"/>
    </cofactor>
    <text evidence="1">Binds 2 magnesium ions per monomer.</text>
</comment>
<comment type="pathway">
    <text evidence="1">Amino-acid biosynthesis; L-tryptophan biosynthesis; L-tryptophan from chorismate: step 2/5.</text>
</comment>
<comment type="subunit">
    <text evidence="1">Homodimer.</text>
</comment>
<comment type="similarity">
    <text evidence="1">Belongs to the anthranilate phosphoribosyltransferase family.</text>
</comment>